<sequence>MQPDLNPNTTQPLIALTGIGKRFPGVQALDDCRFDLRAGEVHALMGENGAGKSTLMKILAGVYQRDAGEIRMDGRPVEIADPRAAQALGIGIIHQELNLMNHLSVAQNIFIGREPRGRFGVFVDEEKLNRDAAAIFQRMRLDLDPRTPVGRLTVAKQQMVEIAKALSFDSRALIMDEPTAALNNAEIAELFRIIRDLRAHGVGIIYISHKMDELRQIADRVTVMRDGKYVATVPMADTSMESIISMMVGRQLDTETRTPPDTSGNEIALEVRGLSRGRAIRDVGFTLRRGEILGFAGLMGAGRTEVARAVFGADPVDAGEIRVHGRAVTIRTPADAVKYGIGYLSEDRKHFGLAIGMDVQNNIALSSMRRFVRRGLFLDARGMRDAARSYVRQLAIRTPSVAQPARLLSGGNQQKIVIAKWLLRDCDILFFDEPTRGIDVGAKSEIYKLLDALAADGKAIVMISSELPEVLRMSHRILVMCEGRVTGELRAADATQEKIMQLATQRESTVLS</sequence>
<name>RGMG2_BURO1</name>
<keyword id="KW-0067">ATP-binding</keyword>
<keyword id="KW-0997">Cell inner membrane</keyword>
<keyword id="KW-1003">Cell membrane</keyword>
<keyword id="KW-0472">Membrane</keyword>
<keyword id="KW-0547">Nucleotide-binding</keyword>
<keyword id="KW-0677">Repeat</keyword>
<keyword id="KW-0762">Sugar transport</keyword>
<keyword id="KW-1278">Translocase</keyword>
<keyword id="KW-0813">Transport</keyword>
<comment type="function">
    <text evidence="1">Part of an ABC transporter complex involved in carbohydrate import. Could be involved in ribose, galactose and/or methyl galactoside import. Responsible for energy coupling to the transport system.</text>
</comment>
<comment type="catalytic activity">
    <reaction evidence="1">
        <text>D-ribose(out) + ATP + H2O = D-ribose(in) + ADP + phosphate + H(+)</text>
        <dbReference type="Rhea" id="RHEA:29903"/>
        <dbReference type="ChEBI" id="CHEBI:15377"/>
        <dbReference type="ChEBI" id="CHEBI:15378"/>
        <dbReference type="ChEBI" id="CHEBI:30616"/>
        <dbReference type="ChEBI" id="CHEBI:43474"/>
        <dbReference type="ChEBI" id="CHEBI:47013"/>
        <dbReference type="ChEBI" id="CHEBI:456216"/>
        <dbReference type="EC" id="7.5.2.7"/>
    </reaction>
</comment>
<comment type="catalytic activity">
    <reaction evidence="1">
        <text>D-galactose(out) + ATP + H2O = D-galactose(in) + ADP + phosphate + H(+)</text>
        <dbReference type="Rhea" id="RHEA:60156"/>
        <dbReference type="ChEBI" id="CHEBI:4139"/>
        <dbReference type="ChEBI" id="CHEBI:15377"/>
        <dbReference type="ChEBI" id="CHEBI:15378"/>
        <dbReference type="ChEBI" id="CHEBI:30616"/>
        <dbReference type="ChEBI" id="CHEBI:43474"/>
        <dbReference type="ChEBI" id="CHEBI:456216"/>
        <dbReference type="EC" id="7.5.2.11"/>
    </reaction>
</comment>
<comment type="subcellular location">
    <subcellularLocation>
        <location evidence="1">Cell inner membrane</location>
        <topology evidence="1">Peripheral membrane protein</topology>
    </subcellularLocation>
</comment>
<comment type="similarity">
    <text evidence="1">Belongs to the ABC transporter superfamily. Carbohydrate importer 2 (CUT2) (TC 3.A.1.2) family.</text>
</comment>
<accession>Q1BQ82</accession>
<organism>
    <name type="scientific">Burkholderia orbicola (strain AU 1054)</name>
    <dbReference type="NCBI Taxonomy" id="331271"/>
    <lineage>
        <taxon>Bacteria</taxon>
        <taxon>Pseudomonadati</taxon>
        <taxon>Pseudomonadota</taxon>
        <taxon>Betaproteobacteria</taxon>
        <taxon>Burkholderiales</taxon>
        <taxon>Burkholderiaceae</taxon>
        <taxon>Burkholderia</taxon>
        <taxon>Burkholderia cepacia complex</taxon>
        <taxon>Burkholderia orbicola</taxon>
    </lineage>
</organism>
<feature type="chain" id="PRO_0000262975" description="Putative ribose/galactose/methyl galactoside import ATP-binding protein 2">
    <location>
        <begin position="1"/>
        <end position="512"/>
    </location>
</feature>
<feature type="domain" description="ABC transporter 1" evidence="1">
    <location>
        <begin position="14"/>
        <end position="251"/>
    </location>
</feature>
<feature type="domain" description="ABC transporter 2" evidence="1">
    <location>
        <begin position="262"/>
        <end position="507"/>
    </location>
</feature>
<feature type="binding site" evidence="1">
    <location>
        <begin position="46"/>
        <end position="53"/>
    </location>
    <ligand>
        <name>ATP</name>
        <dbReference type="ChEBI" id="CHEBI:30616"/>
    </ligand>
</feature>
<gene>
    <name type="ordered locus">Bcen_3328</name>
</gene>
<proteinExistence type="inferred from homology"/>
<dbReference type="EC" id="7.5.2.11" evidence="1"/>
<dbReference type="EC" id="7.5.2.7" evidence="1"/>
<dbReference type="EMBL" id="CP000379">
    <property type="protein sequence ID" value="ABF78223.1"/>
    <property type="molecule type" value="Genomic_DNA"/>
</dbReference>
<dbReference type="SMR" id="Q1BQ82"/>
<dbReference type="HOGENOM" id="CLU_000604_92_3_4"/>
<dbReference type="GO" id="GO:0005886">
    <property type="term" value="C:plasma membrane"/>
    <property type="evidence" value="ECO:0007669"/>
    <property type="project" value="UniProtKB-SubCell"/>
</dbReference>
<dbReference type="GO" id="GO:0015611">
    <property type="term" value="F:ABC-type D-ribose transporter activity"/>
    <property type="evidence" value="ECO:0007669"/>
    <property type="project" value="UniProtKB-EC"/>
</dbReference>
<dbReference type="GO" id="GO:0005524">
    <property type="term" value="F:ATP binding"/>
    <property type="evidence" value="ECO:0007669"/>
    <property type="project" value="UniProtKB-KW"/>
</dbReference>
<dbReference type="GO" id="GO:0016887">
    <property type="term" value="F:ATP hydrolysis activity"/>
    <property type="evidence" value="ECO:0007669"/>
    <property type="project" value="InterPro"/>
</dbReference>
<dbReference type="CDD" id="cd03216">
    <property type="entry name" value="ABC_Carb_Monos_I"/>
    <property type="match status" value="1"/>
</dbReference>
<dbReference type="CDD" id="cd03215">
    <property type="entry name" value="ABC_Carb_Monos_II"/>
    <property type="match status" value="1"/>
</dbReference>
<dbReference type="FunFam" id="3.40.50.300:FF:000126">
    <property type="entry name" value="Galactose/methyl galactoside import ATP-binding protein MglA"/>
    <property type="match status" value="1"/>
</dbReference>
<dbReference type="FunFam" id="3.40.50.300:FF:000127">
    <property type="entry name" value="Ribose import ATP-binding protein RbsA"/>
    <property type="match status" value="1"/>
</dbReference>
<dbReference type="Gene3D" id="3.40.50.300">
    <property type="entry name" value="P-loop containing nucleotide triphosphate hydrolases"/>
    <property type="match status" value="2"/>
</dbReference>
<dbReference type="InterPro" id="IPR003593">
    <property type="entry name" value="AAA+_ATPase"/>
</dbReference>
<dbReference type="InterPro" id="IPR050107">
    <property type="entry name" value="ABC_carbohydrate_import_ATPase"/>
</dbReference>
<dbReference type="InterPro" id="IPR003439">
    <property type="entry name" value="ABC_transporter-like_ATP-bd"/>
</dbReference>
<dbReference type="InterPro" id="IPR017871">
    <property type="entry name" value="ABC_transporter-like_CS"/>
</dbReference>
<dbReference type="InterPro" id="IPR027417">
    <property type="entry name" value="P-loop_NTPase"/>
</dbReference>
<dbReference type="PANTHER" id="PTHR43790">
    <property type="entry name" value="CARBOHYDRATE TRANSPORT ATP-BINDING PROTEIN MG119-RELATED"/>
    <property type="match status" value="1"/>
</dbReference>
<dbReference type="PANTHER" id="PTHR43790:SF3">
    <property type="entry name" value="D-ALLOSE IMPORT ATP-BINDING PROTEIN ALSA-RELATED"/>
    <property type="match status" value="1"/>
</dbReference>
<dbReference type="Pfam" id="PF00005">
    <property type="entry name" value="ABC_tran"/>
    <property type="match status" value="2"/>
</dbReference>
<dbReference type="SMART" id="SM00382">
    <property type="entry name" value="AAA"/>
    <property type="match status" value="2"/>
</dbReference>
<dbReference type="SUPFAM" id="SSF52540">
    <property type="entry name" value="P-loop containing nucleoside triphosphate hydrolases"/>
    <property type="match status" value="2"/>
</dbReference>
<dbReference type="PROSITE" id="PS00211">
    <property type="entry name" value="ABC_TRANSPORTER_1"/>
    <property type="match status" value="1"/>
</dbReference>
<dbReference type="PROSITE" id="PS50893">
    <property type="entry name" value="ABC_TRANSPORTER_2"/>
    <property type="match status" value="2"/>
</dbReference>
<dbReference type="PROSITE" id="PS51260">
    <property type="entry name" value="MGLA"/>
    <property type="match status" value="1"/>
</dbReference>
<dbReference type="PROSITE" id="PS51254">
    <property type="entry name" value="RBSA"/>
    <property type="match status" value="1"/>
</dbReference>
<protein>
    <recommendedName>
        <fullName evidence="1">Putative ribose/galactose/methyl galactoside import ATP-binding protein 2</fullName>
        <ecNumber evidence="1">7.5.2.11</ecNumber>
        <ecNumber evidence="1">7.5.2.7</ecNumber>
    </recommendedName>
</protein>
<evidence type="ECO:0000255" key="1">
    <source>
        <dbReference type="HAMAP-Rule" id="MF_01717"/>
    </source>
</evidence>
<reference key="1">
    <citation type="submission" date="2006-05" db="EMBL/GenBank/DDBJ databases">
        <title>Complete sequence of chromosome 2 of Burkholderia cenocepacia AU 1054.</title>
        <authorList>
            <consortium name="US DOE Joint Genome Institute"/>
            <person name="Copeland A."/>
            <person name="Lucas S."/>
            <person name="Lapidus A."/>
            <person name="Barry K."/>
            <person name="Detter J.C."/>
            <person name="Glavina del Rio T."/>
            <person name="Hammon N."/>
            <person name="Israni S."/>
            <person name="Dalin E."/>
            <person name="Tice H."/>
            <person name="Pitluck S."/>
            <person name="Chain P."/>
            <person name="Malfatti S."/>
            <person name="Shin M."/>
            <person name="Vergez L."/>
            <person name="Schmutz J."/>
            <person name="Larimer F."/>
            <person name="Land M."/>
            <person name="Hauser L."/>
            <person name="Kyrpides N."/>
            <person name="Lykidis A."/>
            <person name="LiPuma J.J."/>
            <person name="Konstantinidis K."/>
            <person name="Tiedje J.M."/>
            <person name="Richardson P."/>
        </authorList>
    </citation>
    <scope>NUCLEOTIDE SEQUENCE [LARGE SCALE GENOMIC DNA]</scope>
    <source>
        <strain>AU 1054</strain>
    </source>
</reference>